<reference key="1">
    <citation type="journal article" date="2002" name="Nature">
        <title>The genome sequence of Schizosaccharomyces pombe.</title>
        <authorList>
            <person name="Wood V."/>
            <person name="Gwilliam R."/>
            <person name="Rajandream M.A."/>
            <person name="Lyne M.H."/>
            <person name="Lyne R."/>
            <person name="Stewart A."/>
            <person name="Sgouros J.G."/>
            <person name="Peat N."/>
            <person name="Hayles J."/>
            <person name="Baker S.G."/>
            <person name="Basham D."/>
            <person name="Bowman S."/>
            <person name="Brooks K."/>
            <person name="Brown D."/>
            <person name="Brown S."/>
            <person name="Chillingworth T."/>
            <person name="Churcher C.M."/>
            <person name="Collins M."/>
            <person name="Connor R."/>
            <person name="Cronin A."/>
            <person name="Davis P."/>
            <person name="Feltwell T."/>
            <person name="Fraser A."/>
            <person name="Gentles S."/>
            <person name="Goble A."/>
            <person name="Hamlin N."/>
            <person name="Harris D.E."/>
            <person name="Hidalgo J."/>
            <person name="Hodgson G."/>
            <person name="Holroyd S."/>
            <person name="Hornsby T."/>
            <person name="Howarth S."/>
            <person name="Huckle E.J."/>
            <person name="Hunt S."/>
            <person name="Jagels K."/>
            <person name="James K.D."/>
            <person name="Jones L."/>
            <person name="Jones M."/>
            <person name="Leather S."/>
            <person name="McDonald S."/>
            <person name="McLean J."/>
            <person name="Mooney P."/>
            <person name="Moule S."/>
            <person name="Mungall K.L."/>
            <person name="Murphy L.D."/>
            <person name="Niblett D."/>
            <person name="Odell C."/>
            <person name="Oliver K."/>
            <person name="O'Neil S."/>
            <person name="Pearson D."/>
            <person name="Quail M.A."/>
            <person name="Rabbinowitsch E."/>
            <person name="Rutherford K.M."/>
            <person name="Rutter S."/>
            <person name="Saunders D."/>
            <person name="Seeger K."/>
            <person name="Sharp S."/>
            <person name="Skelton J."/>
            <person name="Simmonds M.N."/>
            <person name="Squares R."/>
            <person name="Squares S."/>
            <person name="Stevens K."/>
            <person name="Taylor K."/>
            <person name="Taylor R.G."/>
            <person name="Tivey A."/>
            <person name="Walsh S.V."/>
            <person name="Warren T."/>
            <person name="Whitehead S."/>
            <person name="Woodward J.R."/>
            <person name="Volckaert G."/>
            <person name="Aert R."/>
            <person name="Robben J."/>
            <person name="Grymonprez B."/>
            <person name="Weltjens I."/>
            <person name="Vanstreels E."/>
            <person name="Rieger M."/>
            <person name="Schaefer M."/>
            <person name="Mueller-Auer S."/>
            <person name="Gabel C."/>
            <person name="Fuchs M."/>
            <person name="Duesterhoeft A."/>
            <person name="Fritzc C."/>
            <person name="Holzer E."/>
            <person name="Moestl D."/>
            <person name="Hilbert H."/>
            <person name="Borzym K."/>
            <person name="Langer I."/>
            <person name="Beck A."/>
            <person name="Lehrach H."/>
            <person name="Reinhardt R."/>
            <person name="Pohl T.M."/>
            <person name="Eger P."/>
            <person name="Zimmermann W."/>
            <person name="Wedler H."/>
            <person name="Wambutt R."/>
            <person name="Purnelle B."/>
            <person name="Goffeau A."/>
            <person name="Cadieu E."/>
            <person name="Dreano S."/>
            <person name="Gloux S."/>
            <person name="Lelaure V."/>
            <person name="Mottier S."/>
            <person name="Galibert F."/>
            <person name="Aves S.J."/>
            <person name="Xiang Z."/>
            <person name="Hunt C."/>
            <person name="Moore K."/>
            <person name="Hurst S.M."/>
            <person name="Lucas M."/>
            <person name="Rochet M."/>
            <person name="Gaillardin C."/>
            <person name="Tallada V.A."/>
            <person name="Garzon A."/>
            <person name="Thode G."/>
            <person name="Daga R.R."/>
            <person name="Cruzado L."/>
            <person name="Jimenez J."/>
            <person name="Sanchez M."/>
            <person name="del Rey F."/>
            <person name="Benito J."/>
            <person name="Dominguez A."/>
            <person name="Revuelta J.L."/>
            <person name="Moreno S."/>
            <person name="Armstrong J."/>
            <person name="Forsburg S.L."/>
            <person name="Cerutti L."/>
            <person name="Lowe T."/>
            <person name="McCombie W.R."/>
            <person name="Paulsen I."/>
            <person name="Potashkin J."/>
            <person name="Shpakovski G.V."/>
            <person name="Ussery D."/>
            <person name="Barrell B.G."/>
            <person name="Nurse P."/>
        </authorList>
    </citation>
    <scope>NUCLEOTIDE SEQUENCE [LARGE SCALE GENOMIC DNA]</scope>
    <source>
        <strain>972 / ATCC 24843</strain>
    </source>
</reference>
<reference key="2">
    <citation type="journal article" date="2006" name="Nat. Biotechnol.">
        <title>ORFeome cloning and global analysis of protein localization in the fission yeast Schizosaccharomyces pombe.</title>
        <authorList>
            <person name="Matsuyama A."/>
            <person name="Arai R."/>
            <person name="Yashiroda Y."/>
            <person name="Shirai A."/>
            <person name="Kamata A."/>
            <person name="Sekido S."/>
            <person name="Kobayashi Y."/>
            <person name="Hashimoto A."/>
            <person name="Hamamoto M."/>
            <person name="Hiraoka Y."/>
            <person name="Horinouchi S."/>
            <person name="Yoshida M."/>
        </authorList>
    </citation>
    <scope>SUBCELLULAR LOCATION [LARGE SCALE ANALYSIS]</scope>
</reference>
<reference key="3">
    <citation type="journal article" date="2007" name="Genes Dev.">
        <title>Ubiquitylation of histone H2B controls RNA polymerase II transcription elongation independently of histone H3 methylation.</title>
        <authorList>
            <person name="Tanny J.C."/>
            <person name="Erdjument-Bromage H."/>
            <person name="Tempst P."/>
            <person name="Allis C.D."/>
        </authorList>
    </citation>
    <scope>FUNCTION</scope>
</reference>
<reference key="4">
    <citation type="journal article" date="2007" name="J. Biol. Chem.">
        <title>HULC, a histone H2B ubiquitinating complex, modulates heterochromatin independent of histone methylation in fission yeast.</title>
        <authorList>
            <person name="Zofall M."/>
            <person name="Grewal S.I.S."/>
        </authorList>
    </citation>
    <scope>IDENTIFICATION IN THE HULC COMPLEX</scope>
    <scope>FUNCTION OF THE HULC COMPLEX</scope>
    <scope>IDENTIFICATION BY MASS SPECTROMETRY</scope>
</reference>
<organism>
    <name type="scientific">Schizosaccharomyces pombe (strain 972 / ATCC 24843)</name>
    <name type="common">Fission yeast</name>
    <dbReference type="NCBI Taxonomy" id="284812"/>
    <lineage>
        <taxon>Eukaryota</taxon>
        <taxon>Fungi</taxon>
        <taxon>Dikarya</taxon>
        <taxon>Ascomycota</taxon>
        <taxon>Taphrinomycotina</taxon>
        <taxon>Schizosaccharomycetes</taxon>
        <taxon>Schizosaccharomycetales</taxon>
        <taxon>Schizosaccharomycetaceae</taxon>
        <taxon>Schizosaccharomyces</taxon>
    </lineage>
</organism>
<evidence type="ECO:0000255" key="1"/>
<evidence type="ECO:0000255" key="2">
    <source>
        <dbReference type="PROSITE-ProRule" id="PRU00175"/>
    </source>
</evidence>
<evidence type="ECO:0000256" key="3">
    <source>
        <dbReference type="SAM" id="MobiDB-lite"/>
    </source>
</evidence>
<evidence type="ECO:0000269" key="4">
    <source>
    </source>
</evidence>
<evidence type="ECO:0000269" key="5">
    <source>
    </source>
</evidence>
<evidence type="ECO:0000269" key="6">
    <source>
    </source>
</evidence>
<evidence type="ECO:0000305" key="7"/>
<proteinExistence type="evidence at protein level"/>
<feature type="chain" id="PRO_0000055855" description="E3 ubiquitin-protein ligase brl2">
    <location>
        <begin position="1"/>
        <end position="680"/>
    </location>
</feature>
<feature type="zinc finger region" description="RING-type" evidence="2">
    <location>
        <begin position="627"/>
        <end position="667"/>
    </location>
</feature>
<feature type="region of interest" description="Disordered" evidence="3">
    <location>
        <begin position="206"/>
        <end position="233"/>
    </location>
</feature>
<feature type="coiled-coil region" evidence="1">
    <location>
        <begin position="44"/>
        <end position="72"/>
    </location>
</feature>
<feature type="coiled-coil region" evidence="1">
    <location>
        <begin position="261"/>
        <end position="288"/>
    </location>
</feature>
<feature type="coiled-coil region" evidence="1">
    <location>
        <begin position="353"/>
        <end position="399"/>
    </location>
</feature>
<feature type="coiled-coil region" evidence="1">
    <location>
        <begin position="485"/>
        <end position="609"/>
    </location>
</feature>
<feature type="compositionally biased region" description="Basic and acidic residues" evidence="3">
    <location>
        <begin position="210"/>
        <end position="229"/>
    </location>
</feature>
<keyword id="KW-0156">Chromatin regulator</keyword>
<keyword id="KW-0175">Coiled coil</keyword>
<keyword id="KW-0479">Metal-binding</keyword>
<keyword id="KW-0539">Nucleus</keyword>
<keyword id="KW-1185">Reference proteome</keyword>
<keyword id="KW-0808">Transferase</keyword>
<keyword id="KW-0833">Ubl conjugation pathway</keyword>
<keyword id="KW-0862">Zinc</keyword>
<keyword id="KW-0863">Zinc-finger</keyword>
<dbReference type="EC" id="2.3.2.27" evidence="7"/>
<dbReference type="EMBL" id="CU329672">
    <property type="protein sequence ID" value="CAA20703.1"/>
    <property type="molecule type" value="Genomic_DNA"/>
</dbReference>
<dbReference type="PIR" id="T41670">
    <property type="entry name" value="T41670"/>
</dbReference>
<dbReference type="RefSeq" id="NP_587845.1">
    <property type="nucleotide sequence ID" value="NM_001022838.2"/>
</dbReference>
<dbReference type="SMR" id="O74563"/>
<dbReference type="BioGRID" id="275874">
    <property type="interactions" value="7"/>
</dbReference>
<dbReference type="ComplexPortal" id="CPX-10330">
    <property type="entry name" value="Histone H2B ubiquitin ligase complex"/>
</dbReference>
<dbReference type="FunCoup" id="O74563">
    <property type="interactions" value="262"/>
</dbReference>
<dbReference type="IntAct" id="O74563">
    <property type="interactions" value="2"/>
</dbReference>
<dbReference type="STRING" id="284812.O74563"/>
<dbReference type="iPTMnet" id="O74563"/>
<dbReference type="PaxDb" id="4896-SPCC970.10c.1"/>
<dbReference type="EnsemblFungi" id="SPCC970.10c.1">
    <property type="protein sequence ID" value="SPCC970.10c.1:pep"/>
    <property type="gene ID" value="SPCC970.10c"/>
</dbReference>
<dbReference type="GeneID" id="2539307"/>
<dbReference type="KEGG" id="spo:2539307"/>
<dbReference type="PomBase" id="SPCC970.10c">
    <property type="gene designation" value="brl2"/>
</dbReference>
<dbReference type="VEuPathDB" id="FungiDB:SPCC970.10c"/>
<dbReference type="eggNOG" id="KOG0978">
    <property type="taxonomic scope" value="Eukaryota"/>
</dbReference>
<dbReference type="HOGENOM" id="CLU_019713_2_0_1"/>
<dbReference type="InParanoid" id="O74563"/>
<dbReference type="OMA" id="YRQMQEY"/>
<dbReference type="PhylomeDB" id="O74563"/>
<dbReference type="UniPathway" id="UPA00143"/>
<dbReference type="PRO" id="PR:O74563"/>
<dbReference type="Proteomes" id="UP000002485">
    <property type="component" value="Chromosome III"/>
</dbReference>
<dbReference type="GO" id="GO:0033503">
    <property type="term" value="C:HULC complex"/>
    <property type="evidence" value="ECO:0000314"/>
    <property type="project" value="PomBase"/>
</dbReference>
<dbReference type="GO" id="GO:0005634">
    <property type="term" value="C:nucleus"/>
    <property type="evidence" value="ECO:0007005"/>
    <property type="project" value="PomBase"/>
</dbReference>
<dbReference type="GO" id="GO:0140850">
    <property type="term" value="F:histone H2B C-terminal K residue ubiquitin ligase activity"/>
    <property type="evidence" value="ECO:0000269"/>
    <property type="project" value="PomBase"/>
</dbReference>
<dbReference type="GO" id="GO:0061630">
    <property type="term" value="F:ubiquitin protein ligase activity"/>
    <property type="evidence" value="ECO:0000318"/>
    <property type="project" value="GO_Central"/>
</dbReference>
<dbReference type="GO" id="GO:0008270">
    <property type="term" value="F:zinc ion binding"/>
    <property type="evidence" value="ECO:0000255"/>
    <property type="project" value="PomBase"/>
</dbReference>
<dbReference type="GO" id="GO:0007535">
    <property type="term" value="P:donor selection"/>
    <property type="evidence" value="ECO:0000314"/>
    <property type="project" value="PomBase"/>
</dbReference>
<dbReference type="GO" id="GO:0040029">
    <property type="term" value="P:epigenetic regulation of gene expression"/>
    <property type="evidence" value="ECO:0000315"/>
    <property type="project" value="PomBase"/>
</dbReference>
<dbReference type="GO" id="GO:0016567">
    <property type="term" value="P:protein ubiquitination"/>
    <property type="evidence" value="ECO:0007669"/>
    <property type="project" value="UniProtKB-UniPathway"/>
</dbReference>
<dbReference type="GO" id="GO:0140673">
    <property type="term" value="P:transcription elongation-coupled chromatin remodeling"/>
    <property type="evidence" value="ECO:0000304"/>
    <property type="project" value="PomBase"/>
</dbReference>
<dbReference type="CDD" id="cd16499">
    <property type="entry name" value="RING-HC_Bre1-like"/>
    <property type="match status" value="1"/>
</dbReference>
<dbReference type="Gene3D" id="3.30.40.10">
    <property type="entry name" value="Zinc/RING finger domain, C3HC4 (zinc finger)"/>
    <property type="match status" value="1"/>
</dbReference>
<dbReference type="InterPro" id="IPR013956">
    <property type="entry name" value="E3_ubiquit_lig_Bre1"/>
</dbReference>
<dbReference type="InterPro" id="IPR001841">
    <property type="entry name" value="Znf_RING"/>
</dbReference>
<dbReference type="InterPro" id="IPR013083">
    <property type="entry name" value="Znf_RING/FYVE/PHD"/>
</dbReference>
<dbReference type="InterPro" id="IPR017907">
    <property type="entry name" value="Znf_RING_CS"/>
</dbReference>
<dbReference type="PANTHER" id="PTHR23163:SF0">
    <property type="entry name" value="E3 UBIQUITIN-PROTEIN LIGASE BRE1"/>
    <property type="match status" value="1"/>
</dbReference>
<dbReference type="PANTHER" id="PTHR23163">
    <property type="entry name" value="RING FINGER PROTEIN-RELATED"/>
    <property type="match status" value="1"/>
</dbReference>
<dbReference type="Pfam" id="PF08647">
    <property type="entry name" value="BRE1"/>
    <property type="match status" value="1"/>
</dbReference>
<dbReference type="Pfam" id="PF13923">
    <property type="entry name" value="zf-C3HC4_2"/>
    <property type="match status" value="1"/>
</dbReference>
<dbReference type="SMART" id="SM00184">
    <property type="entry name" value="RING"/>
    <property type="match status" value="1"/>
</dbReference>
<dbReference type="SUPFAM" id="SSF57850">
    <property type="entry name" value="RING/U-box"/>
    <property type="match status" value="1"/>
</dbReference>
<dbReference type="PROSITE" id="PS00518">
    <property type="entry name" value="ZF_RING_1"/>
    <property type="match status" value="1"/>
</dbReference>
<dbReference type="PROSITE" id="PS50089">
    <property type="entry name" value="ZF_RING_2"/>
    <property type="match status" value="1"/>
</dbReference>
<protein>
    <recommendedName>
        <fullName>E3 ubiquitin-protein ligase brl2</fullName>
        <ecNumber evidence="7">2.3.2.27</ecNumber>
    </recommendedName>
    <alternativeName>
        <fullName>BRE1-like protein 2</fullName>
    </alternativeName>
    <alternativeName>
        <fullName>RING finger protein 1</fullName>
    </alternativeName>
    <alternativeName>
        <fullName evidence="7">RING-type E3 ubiquitin transferase brl2</fullName>
    </alternativeName>
</protein>
<sequence length="680" mass="78053">MYQNGKPDAPTILGQKRELEDVEIQDDDIQEVSKEDLLKDVRVRSIQFDELESKIEGLQNLAEEKLKVLATLVSWWPEILQQFSVVFQGNELKDFESEGVFSILEKFPELSYFNDAVKNNKTKALSIIQKLLSTVDSSTNSVSRDPFSVLSIDDSALTEKLNTINLDIDKILDELDTTRSQLHSIIKLPDRSSSFTLQCINESVRPQSTKVKEEATTSSKGKDEEKKVSTVEQRTQLQQLSRLQDQQNGLMESRSQSLKILDSNVNEMDKLIMERENALNNVETTNLKKYSSFLALKEAVSMTSEQLRVLEHLLSECSHEINVLSQQSKNFNGVFESSYQPLINDLDHQISVMQNDEKRINNAKTELSLSLEKKLEAKKQKEKVYKDKLDELANLETMVLEKKKAVATREAANKIRLVDLNDLELQKDLSTYLSKELASTEKAFRLVKQQTVKSSHSHYQELITKFSVEKEKAEQKYFLTMKSTDSLHAEVKLLRQKYQKTNEIISKMLNSQDTAVHRIIEFEDQLARLSSVRNNSIKQSTTFQVKKSSQKSTIQNLEEKVSYLQQFMDKNNATLTDLEFQCSDLSSSIDILSKQDEEHEKEKRKLKDTGVSTSAEELKTFRAMCKCSVCNFERWKDRIISLCGHGFCYQCIQKRIETRQRRCPICGRGFGASDVIPIHL</sequence>
<gene>
    <name type="primary">brl2</name>
    <name type="synonym">rfp1</name>
    <name type="ORF">SPCC970.10c</name>
</gene>
<name>BRL2_SCHPO</name>
<comment type="function">
    <text evidence="5 6">E3 ubiquitin-protein ligase which belongs to the histone H2B ubiquitin ligase complex (HULC) which mediates monoubiquitination of histone H2B to form H2BK123ub1. H2BK123ub1 gives a specific tag for epigenetic transcriptional activation and is also a prerequisite for H3K4me and H3K79me formation.</text>
</comment>
<comment type="catalytic activity">
    <reaction evidence="7">
        <text>S-ubiquitinyl-[E2 ubiquitin-conjugating enzyme]-L-cysteine + [acceptor protein]-L-lysine = [E2 ubiquitin-conjugating enzyme]-L-cysteine + N(6)-ubiquitinyl-[acceptor protein]-L-lysine.</text>
        <dbReference type="EC" id="2.3.2.27"/>
    </reaction>
</comment>
<comment type="pathway">
    <text>Protein modification; protein ubiquitination.</text>
</comment>
<comment type="subunit">
    <text evidence="5">Component of the histone H2B ubiquitin ligase complex (HULC) composed of at least brl1, brl2, rhp6 and shf1.</text>
</comment>
<comment type="subcellular location">
    <subcellularLocation>
        <location evidence="4">Nucleus</location>
    </subcellularLocation>
</comment>
<comment type="similarity">
    <text evidence="7">Belongs to the BRE1 family.</text>
</comment>
<accession>O74563</accession>